<proteinExistence type="predicted"/>
<dbReference type="EMBL" id="U24430">
    <property type="protein sequence ID" value="AAA98604.1"/>
    <property type="molecule type" value="Genomic_DNA"/>
</dbReference>
<dbReference type="EMBL" id="CU329670">
    <property type="protein sequence ID" value="CAB16280.1"/>
    <property type="molecule type" value="Genomic_DNA"/>
</dbReference>
<dbReference type="EMBL" id="AB027862">
    <property type="protein sequence ID" value="BAA87166.1"/>
    <property type="molecule type" value="Genomic_DNA"/>
</dbReference>
<dbReference type="PIR" id="T38723">
    <property type="entry name" value="T38723"/>
</dbReference>
<dbReference type="RefSeq" id="NP_594970.1">
    <property type="nucleotide sequence ID" value="NM_001020401.2"/>
</dbReference>
<dbReference type="SMR" id="Q09100"/>
<dbReference type="BioGRID" id="279405">
    <property type="interactions" value="13"/>
</dbReference>
<dbReference type="FunCoup" id="Q09100">
    <property type="interactions" value="401"/>
</dbReference>
<dbReference type="STRING" id="284812.Q09100"/>
<dbReference type="iPTMnet" id="Q09100"/>
<dbReference type="PaxDb" id="4896-SPAC3G6.04.1"/>
<dbReference type="EnsemblFungi" id="SPAC3G6.04.1">
    <property type="protein sequence ID" value="SPAC3G6.04.1:pep"/>
    <property type="gene ID" value="SPAC3G6.04"/>
</dbReference>
<dbReference type="GeneID" id="2542965"/>
<dbReference type="KEGG" id="spo:2542965"/>
<dbReference type="PomBase" id="SPAC3G6.04">
    <property type="gene designation" value="rnp24"/>
</dbReference>
<dbReference type="VEuPathDB" id="FungiDB:SPAC3G6.04"/>
<dbReference type="eggNOG" id="KOG4210">
    <property type="taxonomic scope" value="Eukaryota"/>
</dbReference>
<dbReference type="HOGENOM" id="CLU_027451_0_0_1"/>
<dbReference type="InParanoid" id="Q09100"/>
<dbReference type="OMA" id="RVWVNQL"/>
<dbReference type="PhylomeDB" id="Q09100"/>
<dbReference type="PRO" id="PR:Q09100"/>
<dbReference type="Proteomes" id="UP000002485">
    <property type="component" value="Chromosome I"/>
</dbReference>
<dbReference type="GO" id="GO:0010494">
    <property type="term" value="C:cytoplasmic stress granule"/>
    <property type="evidence" value="ECO:0000318"/>
    <property type="project" value="GO_Central"/>
</dbReference>
<dbReference type="GO" id="GO:0005829">
    <property type="term" value="C:cytosol"/>
    <property type="evidence" value="ECO:0000318"/>
    <property type="project" value="GO_Central"/>
</dbReference>
<dbReference type="GO" id="GO:0005730">
    <property type="term" value="C:nucleolus"/>
    <property type="evidence" value="ECO:0007005"/>
    <property type="project" value="PomBase"/>
</dbReference>
<dbReference type="GO" id="GO:0005634">
    <property type="term" value="C:nucleus"/>
    <property type="evidence" value="ECO:0007005"/>
    <property type="project" value="PomBase"/>
</dbReference>
<dbReference type="GO" id="GO:1990904">
    <property type="term" value="C:ribonucleoprotein complex"/>
    <property type="evidence" value="ECO:0000318"/>
    <property type="project" value="GO_Central"/>
</dbReference>
<dbReference type="GO" id="GO:0003730">
    <property type="term" value="F:mRNA 3'-UTR binding"/>
    <property type="evidence" value="ECO:0000318"/>
    <property type="project" value="GO_Central"/>
</dbReference>
<dbReference type="GO" id="GO:0008143">
    <property type="term" value="F:poly(A) binding"/>
    <property type="evidence" value="ECO:0000318"/>
    <property type="project" value="GO_Central"/>
</dbReference>
<dbReference type="GO" id="GO:0008266">
    <property type="term" value="F:poly(U) RNA binding"/>
    <property type="evidence" value="ECO:0000318"/>
    <property type="project" value="GO_Central"/>
</dbReference>
<dbReference type="GO" id="GO:0006364">
    <property type="term" value="P:rRNA processing"/>
    <property type="evidence" value="ECO:0000266"/>
    <property type="project" value="PomBase"/>
</dbReference>
<dbReference type="CDD" id="cd12396">
    <property type="entry name" value="RRM1_Nop13p_fungi"/>
    <property type="match status" value="1"/>
</dbReference>
<dbReference type="CDD" id="cd12397">
    <property type="entry name" value="RRM2_Nop13p_fungi"/>
    <property type="match status" value="1"/>
</dbReference>
<dbReference type="Gene3D" id="3.30.70.330">
    <property type="match status" value="2"/>
</dbReference>
<dbReference type="InterPro" id="IPR034225">
    <property type="entry name" value="Nop13/Rnp24_RRM1"/>
</dbReference>
<dbReference type="InterPro" id="IPR034226">
    <property type="entry name" value="Nop13/Rnp24_RRM2"/>
</dbReference>
<dbReference type="InterPro" id="IPR012677">
    <property type="entry name" value="Nucleotide-bd_a/b_plait_sf"/>
</dbReference>
<dbReference type="InterPro" id="IPR035979">
    <property type="entry name" value="RBD_domain_sf"/>
</dbReference>
<dbReference type="InterPro" id="IPR000504">
    <property type="entry name" value="RRM_dom"/>
</dbReference>
<dbReference type="PANTHER" id="PTHR23236">
    <property type="entry name" value="EUKARYOTIC TRANSLATION INITIATION FACTOR 4B/4H"/>
    <property type="match status" value="1"/>
</dbReference>
<dbReference type="PANTHER" id="PTHR23236:SF11">
    <property type="entry name" value="EUKARYOTIC TRANSLATION INITIATION FACTOR 4H"/>
    <property type="match status" value="1"/>
</dbReference>
<dbReference type="Pfam" id="PF00076">
    <property type="entry name" value="RRM_1"/>
    <property type="match status" value="1"/>
</dbReference>
<dbReference type="SMART" id="SM00360">
    <property type="entry name" value="RRM"/>
    <property type="match status" value="2"/>
</dbReference>
<dbReference type="SUPFAM" id="SSF54928">
    <property type="entry name" value="RNA-binding domain, RBD"/>
    <property type="match status" value="1"/>
</dbReference>
<dbReference type="PROSITE" id="PS50102">
    <property type="entry name" value="RRM"/>
    <property type="match status" value="2"/>
</dbReference>
<protein>
    <recommendedName>
        <fullName>RNA-binding protein rnp24</fullName>
    </recommendedName>
</protein>
<name>RNP24_SCHPO</name>
<organism>
    <name type="scientific">Schizosaccharomyces pombe (strain 972 / ATCC 24843)</name>
    <name type="common">Fission yeast</name>
    <dbReference type="NCBI Taxonomy" id="284812"/>
    <lineage>
        <taxon>Eukaryota</taxon>
        <taxon>Fungi</taxon>
        <taxon>Dikarya</taxon>
        <taxon>Ascomycota</taxon>
        <taxon>Taphrinomycotina</taxon>
        <taxon>Schizosaccharomycetes</taxon>
        <taxon>Schizosaccharomycetales</taxon>
        <taxon>Schizosaccharomycetaceae</taxon>
        <taxon>Schizosaccharomyces</taxon>
    </lineage>
</organism>
<evidence type="ECO:0000255" key="1">
    <source>
        <dbReference type="PROSITE-ProRule" id="PRU00176"/>
    </source>
</evidence>
<evidence type="ECO:0000256" key="2">
    <source>
        <dbReference type="SAM" id="MobiDB-lite"/>
    </source>
</evidence>
<evidence type="ECO:0000269" key="3">
    <source>
    </source>
</evidence>
<evidence type="ECO:0000305" key="4"/>
<comment type="subcellular location">
    <subcellularLocation>
        <location evidence="3">Nucleus</location>
    </subcellularLocation>
</comment>
<sequence length="369" mass="42074">MEPIQKMDSLNNKEGQPDKKRKKHESEKEGENEVLEIDVTKPVPPSKKLMRKLRKAGKIDKDGNWTPEALEEAKKKEEKRLKRLDAKYGRKEEGESQEESKRSPWGIWVGNLSFHTTKEILTDFFVRETSEMIKEVSEENIKPITTEQITRIHMPMSKEKRFQNKGFAYVDFATEDALKLALQCSEKALNGRNILIKSNTDFSGRPSKPANTLSKTASIQSSKKEPSSILFVGNLDFETTDADLKEHFGQVGQIRRVRLMTFEDTGKCKGFGFVDFPDIDTCMKAMELGHNSWRLEYGEDRSKRMRNKSPMARSGRFNDAESLGQEDKPNFKRARKIDPRSVRPGAALAKAQRSSAAIVEPAGQKIKFD</sequence>
<gene>
    <name type="primary">rnp24</name>
    <name type="ORF">SPAC3G6.04</name>
</gene>
<reference key="1">
    <citation type="journal article" date="1996" name="Curr. Genet.">
        <title>Molecular analysis of a novel Schizosaccharomyces pombe gene containing two RNP consensus-sequence RNA-binding domains.</title>
        <authorList>
            <person name="Vanhoy R.W."/>
            <person name="Wise J.A."/>
        </authorList>
    </citation>
    <scope>NUCLEOTIDE SEQUENCE [GENOMIC DNA]</scope>
</reference>
<reference key="2">
    <citation type="journal article" date="2002" name="Nature">
        <title>The genome sequence of Schizosaccharomyces pombe.</title>
        <authorList>
            <person name="Wood V."/>
            <person name="Gwilliam R."/>
            <person name="Rajandream M.A."/>
            <person name="Lyne M.H."/>
            <person name="Lyne R."/>
            <person name="Stewart A."/>
            <person name="Sgouros J.G."/>
            <person name="Peat N."/>
            <person name="Hayles J."/>
            <person name="Baker S.G."/>
            <person name="Basham D."/>
            <person name="Bowman S."/>
            <person name="Brooks K."/>
            <person name="Brown D."/>
            <person name="Brown S."/>
            <person name="Chillingworth T."/>
            <person name="Churcher C.M."/>
            <person name="Collins M."/>
            <person name="Connor R."/>
            <person name="Cronin A."/>
            <person name="Davis P."/>
            <person name="Feltwell T."/>
            <person name="Fraser A."/>
            <person name="Gentles S."/>
            <person name="Goble A."/>
            <person name="Hamlin N."/>
            <person name="Harris D.E."/>
            <person name="Hidalgo J."/>
            <person name="Hodgson G."/>
            <person name="Holroyd S."/>
            <person name="Hornsby T."/>
            <person name="Howarth S."/>
            <person name="Huckle E.J."/>
            <person name="Hunt S."/>
            <person name="Jagels K."/>
            <person name="James K.D."/>
            <person name="Jones L."/>
            <person name="Jones M."/>
            <person name="Leather S."/>
            <person name="McDonald S."/>
            <person name="McLean J."/>
            <person name="Mooney P."/>
            <person name="Moule S."/>
            <person name="Mungall K.L."/>
            <person name="Murphy L.D."/>
            <person name="Niblett D."/>
            <person name="Odell C."/>
            <person name="Oliver K."/>
            <person name="O'Neil S."/>
            <person name="Pearson D."/>
            <person name="Quail M.A."/>
            <person name="Rabbinowitsch E."/>
            <person name="Rutherford K.M."/>
            <person name="Rutter S."/>
            <person name="Saunders D."/>
            <person name="Seeger K."/>
            <person name="Sharp S."/>
            <person name="Skelton J."/>
            <person name="Simmonds M.N."/>
            <person name="Squares R."/>
            <person name="Squares S."/>
            <person name="Stevens K."/>
            <person name="Taylor K."/>
            <person name="Taylor R.G."/>
            <person name="Tivey A."/>
            <person name="Walsh S.V."/>
            <person name="Warren T."/>
            <person name="Whitehead S."/>
            <person name="Woodward J.R."/>
            <person name="Volckaert G."/>
            <person name="Aert R."/>
            <person name="Robben J."/>
            <person name="Grymonprez B."/>
            <person name="Weltjens I."/>
            <person name="Vanstreels E."/>
            <person name="Rieger M."/>
            <person name="Schaefer M."/>
            <person name="Mueller-Auer S."/>
            <person name="Gabel C."/>
            <person name="Fuchs M."/>
            <person name="Duesterhoeft A."/>
            <person name="Fritzc C."/>
            <person name="Holzer E."/>
            <person name="Moestl D."/>
            <person name="Hilbert H."/>
            <person name="Borzym K."/>
            <person name="Langer I."/>
            <person name="Beck A."/>
            <person name="Lehrach H."/>
            <person name="Reinhardt R."/>
            <person name="Pohl T.M."/>
            <person name="Eger P."/>
            <person name="Zimmermann W."/>
            <person name="Wedler H."/>
            <person name="Wambutt R."/>
            <person name="Purnelle B."/>
            <person name="Goffeau A."/>
            <person name="Cadieu E."/>
            <person name="Dreano S."/>
            <person name="Gloux S."/>
            <person name="Lelaure V."/>
            <person name="Mottier S."/>
            <person name="Galibert F."/>
            <person name="Aves S.J."/>
            <person name="Xiang Z."/>
            <person name="Hunt C."/>
            <person name="Moore K."/>
            <person name="Hurst S.M."/>
            <person name="Lucas M."/>
            <person name="Rochet M."/>
            <person name="Gaillardin C."/>
            <person name="Tallada V.A."/>
            <person name="Garzon A."/>
            <person name="Thode G."/>
            <person name="Daga R.R."/>
            <person name="Cruzado L."/>
            <person name="Jimenez J."/>
            <person name="Sanchez M."/>
            <person name="del Rey F."/>
            <person name="Benito J."/>
            <person name="Dominguez A."/>
            <person name="Revuelta J.L."/>
            <person name="Moreno S."/>
            <person name="Armstrong J."/>
            <person name="Forsburg S.L."/>
            <person name="Cerutti L."/>
            <person name="Lowe T."/>
            <person name="McCombie W.R."/>
            <person name="Paulsen I."/>
            <person name="Potashkin J."/>
            <person name="Shpakovski G.V."/>
            <person name="Ussery D."/>
            <person name="Barrell B.G."/>
            <person name="Nurse P."/>
        </authorList>
    </citation>
    <scope>NUCLEOTIDE SEQUENCE [LARGE SCALE GENOMIC DNA]</scope>
    <source>
        <strain>972 / ATCC 24843</strain>
    </source>
</reference>
<reference key="3">
    <citation type="journal article" date="2000" name="Genes Cells">
        <title>Large-scale screening of intracellular protein localization in living fission yeast cells by the use of a GFP-fusion genomic DNA library.</title>
        <authorList>
            <person name="Ding D.-Q."/>
            <person name="Tomita Y."/>
            <person name="Yamamoto A."/>
            <person name="Chikashige Y."/>
            <person name="Haraguchi T."/>
            <person name="Hiraoka Y."/>
        </authorList>
    </citation>
    <scope>NUCLEOTIDE SEQUENCE [LARGE SCALE GENOMIC DNA] OF 1-196</scope>
    <scope>SUBCELLULAR LOCATION</scope>
    <source>
        <strain>ATCC 38364 / 968</strain>
    </source>
</reference>
<feature type="chain" id="PRO_0000081808" description="RNA-binding protein rnp24">
    <location>
        <begin position="1"/>
        <end position="369"/>
    </location>
</feature>
<feature type="domain" description="RRM 1" evidence="1">
    <location>
        <begin position="105"/>
        <end position="206"/>
    </location>
</feature>
<feature type="domain" description="RRM 2" evidence="1">
    <location>
        <begin position="228"/>
        <end position="310"/>
    </location>
</feature>
<feature type="region of interest" description="Disordered" evidence="2">
    <location>
        <begin position="1"/>
        <end position="77"/>
    </location>
</feature>
<feature type="region of interest" description="Disordered" evidence="2">
    <location>
        <begin position="200"/>
        <end position="219"/>
    </location>
</feature>
<feature type="region of interest" description="Disordered" evidence="2">
    <location>
        <begin position="304"/>
        <end position="369"/>
    </location>
</feature>
<feature type="compositionally biased region" description="Polar residues" evidence="2">
    <location>
        <begin position="209"/>
        <end position="219"/>
    </location>
</feature>
<feature type="compositionally biased region" description="Basic and acidic residues" evidence="2">
    <location>
        <begin position="325"/>
        <end position="341"/>
    </location>
</feature>
<feature type="compositionally biased region" description="Low complexity" evidence="2">
    <location>
        <begin position="346"/>
        <end position="357"/>
    </location>
</feature>
<feature type="sequence conflict" description="In Ref. 1; AAA98604." evidence="4" ref="1">
    <original>RPGAALAKAQRSSAAIVEPAGQKIKFD</original>
    <variation>VPVQH</variation>
    <location>
        <begin position="343"/>
        <end position="369"/>
    </location>
</feature>
<keyword id="KW-0539">Nucleus</keyword>
<keyword id="KW-1185">Reference proteome</keyword>
<keyword id="KW-0677">Repeat</keyword>
<keyword id="KW-0694">RNA-binding</keyword>
<accession>Q09100</accession>
<accession>O74303</accession>
<accession>Q9UU22</accession>